<keyword id="KW-0963">Cytoplasm</keyword>
<keyword id="KW-0342">GTP-binding</keyword>
<keyword id="KW-0378">Hydrolase</keyword>
<keyword id="KW-0460">Magnesium</keyword>
<keyword id="KW-0479">Metal-binding</keyword>
<keyword id="KW-0547">Nucleotide-binding</keyword>
<organism>
    <name type="scientific">Burkholderia pseudomallei (strain 1710b)</name>
    <dbReference type="NCBI Taxonomy" id="320372"/>
    <lineage>
        <taxon>Bacteria</taxon>
        <taxon>Pseudomonadati</taxon>
        <taxon>Pseudomonadota</taxon>
        <taxon>Betaproteobacteria</taxon>
        <taxon>Burkholderiales</taxon>
        <taxon>Burkholderiaceae</taxon>
        <taxon>Burkholderia</taxon>
        <taxon>pseudomallei group</taxon>
    </lineage>
</organism>
<accession>Q3JNG0</accession>
<comment type="function">
    <text evidence="1">An essential GTPase which binds GTP, GDP and possibly (p)ppGpp with moderate affinity, with high nucleotide exchange rates and a fairly low GTP hydrolysis rate. Plays a role in control of the cell cycle, stress response, ribosome biogenesis and in those bacteria that undergo differentiation, in morphogenesis control.</text>
</comment>
<comment type="cofactor">
    <cofactor evidence="1">
        <name>Mg(2+)</name>
        <dbReference type="ChEBI" id="CHEBI:18420"/>
    </cofactor>
</comment>
<comment type="subunit">
    <text evidence="1">Monomer.</text>
</comment>
<comment type="subcellular location">
    <subcellularLocation>
        <location evidence="1">Cytoplasm</location>
    </subcellularLocation>
</comment>
<comment type="similarity">
    <text evidence="1">Belongs to the TRAFAC class OBG-HflX-like GTPase superfamily. OBG GTPase family.</text>
</comment>
<gene>
    <name evidence="1" type="primary">obg</name>
    <name type="ordered locus">BURPS1710b_3522</name>
</gene>
<name>OBG_BURP1</name>
<evidence type="ECO:0000255" key="1">
    <source>
        <dbReference type="HAMAP-Rule" id="MF_01454"/>
    </source>
</evidence>
<evidence type="ECO:0000255" key="2">
    <source>
        <dbReference type="PROSITE-ProRule" id="PRU01231"/>
    </source>
</evidence>
<evidence type="ECO:0000256" key="3">
    <source>
        <dbReference type="SAM" id="MobiDB-lite"/>
    </source>
</evidence>
<reference key="1">
    <citation type="journal article" date="2010" name="Genome Biol. Evol.">
        <title>Continuing evolution of Burkholderia mallei through genome reduction and large-scale rearrangements.</title>
        <authorList>
            <person name="Losada L."/>
            <person name="Ronning C.M."/>
            <person name="DeShazer D."/>
            <person name="Woods D."/>
            <person name="Fedorova N."/>
            <person name="Kim H.S."/>
            <person name="Shabalina S.A."/>
            <person name="Pearson T.R."/>
            <person name="Brinkac L."/>
            <person name="Tan P."/>
            <person name="Nandi T."/>
            <person name="Crabtree J."/>
            <person name="Badger J."/>
            <person name="Beckstrom-Sternberg S."/>
            <person name="Saqib M."/>
            <person name="Schutzer S.E."/>
            <person name="Keim P."/>
            <person name="Nierman W.C."/>
        </authorList>
    </citation>
    <scope>NUCLEOTIDE SEQUENCE [LARGE SCALE GENOMIC DNA]</scope>
    <source>
        <strain>1710b</strain>
    </source>
</reference>
<dbReference type="EC" id="3.6.5.-" evidence="1"/>
<dbReference type="EMBL" id="CP000124">
    <property type="protein sequence ID" value="ABA50954.1"/>
    <property type="molecule type" value="Genomic_DNA"/>
</dbReference>
<dbReference type="SMR" id="Q3JNG0"/>
<dbReference type="EnsemblBacteria" id="ABA50954">
    <property type="protein sequence ID" value="ABA50954"/>
    <property type="gene ID" value="BURPS1710b_3522"/>
</dbReference>
<dbReference type="KEGG" id="bpm:BURPS1710b_3522"/>
<dbReference type="HOGENOM" id="CLU_011747_2_0_4"/>
<dbReference type="Proteomes" id="UP000002700">
    <property type="component" value="Chromosome I"/>
</dbReference>
<dbReference type="GO" id="GO:0005737">
    <property type="term" value="C:cytoplasm"/>
    <property type="evidence" value="ECO:0007669"/>
    <property type="project" value="UniProtKB-SubCell"/>
</dbReference>
<dbReference type="GO" id="GO:0005525">
    <property type="term" value="F:GTP binding"/>
    <property type="evidence" value="ECO:0007669"/>
    <property type="project" value="UniProtKB-UniRule"/>
</dbReference>
<dbReference type="GO" id="GO:0003924">
    <property type="term" value="F:GTPase activity"/>
    <property type="evidence" value="ECO:0007669"/>
    <property type="project" value="UniProtKB-UniRule"/>
</dbReference>
<dbReference type="GO" id="GO:0000287">
    <property type="term" value="F:magnesium ion binding"/>
    <property type="evidence" value="ECO:0007669"/>
    <property type="project" value="InterPro"/>
</dbReference>
<dbReference type="GO" id="GO:0042254">
    <property type="term" value="P:ribosome biogenesis"/>
    <property type="evidence" value="ECO:0007669"/>
    <property type="project" value="UniProtKB-UniRule"/>
</dbReference>
<dbReference type="CDD" id="cd01898">
    <property type="entry name" value="Obg"/>
    <property type="match status" value="1"/>
</dbReference>
<dbReference type="FunFam" id="2.70.210.12:FF:000001">
    <property type="entry name" value="GTPase Obg"/>
    <property type="match status" value="1"/>
</dbReference>
<dbReference type="Gene3D" id="2.70.210.12">
    <property type="entry name" value="GTP1/OBG domain"/>
    <property type="match status" value="1"/>
</dbReference>
<dbReference type="Gene3D" id="3.40.50.300">
    <property type="entry name" value="P-loop containing nucleotide triphosphate hydrolases"/>
    <property type="match status" value="1"/>
</dbReference>
<dbReference type="HAMAP" id="MF_01454">
    <property type="entry name" value="GTPase_Obg"/>
    <property type="match status" value="1"/>
</dbReference>
<dbReference type="InterPro" id="IPR031167">
    <property type="entry name" value="G_OBG"/>
</dbReference>
<dbReference type="InterPro" id="IPR006073">
    <property type="entry name" value="GTP-bd"/>
</dbReference>
<dbReference type="InterPro" id="IPR014100">
    <property type="entry name" value="GTP-bd_Obg/CgtA"/>
</dbReference>
<dbReference type="InterPro" id="IPR006074">
    <property type="entry name" value="GTP1-OBG_CS"/>
</dbReference>
<dbReference type="InterPro" id="IPR006169">
    <property type="entry name" value="GTP1_OBG_dom"/>
</dbReference>
<dbReference type="InterPro" id="IPR036726">
    <property type="entry name" value="GTP1_OBG_dom_sf"/>
</dbReference>
<dbReference type="InterPro" id="IPR045086">
    <property type="entry name" value="OBG_GTPase"/>
</dbReference>
<dbReference type="InterPro" id="IPR027417">
    <property type="entry name" value="P-loop_NTPase"/>
</dbReference>
<dbReference type="NCBIfam" id="TIGR02729">
    <property type="entry name" value="Obg_CgtA"/>
    <property type="match status" value="1"/>
</dbReference>
<dbReference type="NCBIfam" id="NF008954">
    <property type="entry name" value="PRK12296.1"/>
    <property type="match status" value="1"/>
</dbReference>
<dbReference type="NCBIfam" id="NF008955">
    <property type="entry name" value="PRK12297.1"/>
    <property type="match status" value="1"/>
</dbReference>
<dbReference type="NCBIfam" id="NF008956">
    <property type="entry name" value="PRK12299.1"/>
    <property type="match status" value="1"/>
</dbReference>
<dbReference type="PANTHER" id="PTHR11702">
    <property type="entry name" value="DEVELOPMENTALLY REGULATED GTP-BINDING PROTEIN-RELATED"/>
    <property type="match status" value="1"/>
</dbReference>
<dbReference type="PANTHER" id="PTHR11702:SF31">
    <property type="entry name" value="MITOCHONDRIAL RIBOSOME-ASSOCIATED GTPASE 2"/>
    <property type="match status" value="1"/>
</dbReference>
<dbReference type="Pfam" id="PF01018">
    <property type="entry name" value="GTP1_OBG"/>
    <property type="match status" value="1"/>
</dbReference>
<dbReference type="Pfam" id="PF01926">
    <property type="entry name" value="MMR_HSR1"/>
    <property type="match status" value="1"/>
</dbReference>
<dbReference type="PIRSF" id="PIRSF002401">
    <property type="entry name" value="GTP_bd_Obg/CgtA"/>
    <property type="match status" value="1"/>
</dbReference>
<dbReference type="PRINTS" id="PR00326">
    <property type="entry name" value="GTP1OBG"/>
</dbReference>
<dbReference type="SUPFAM" id="SSF82051">
    <property type="entry name" value="Obg GTP-binding protein N-terminal domain"/>
    <property type="match status" value="1"/>
</dbReference>
<dbReference type="SUPFAM" id="SSF52540">
    <property type="entry name" value="P-loop containing nucleoside triphosphate hydrolases"/>
    <property type="match status" value="1"/>
</dbReference>
<dbReference type="PROSITE" id="PS51710">
    <property type="entry name" value="G_OBG"/>
    <property type="match status" value="1"/>
</dbReference>
<dbReference type="PROSITE" id="PS00905">
    <property type="entry name" value="GTP1_OBG"/>
    <property type="match status" value="1"/>
</dbReference>
<dbReference type="PROSITE" id="PS51883">
    <property type="entry name" value="OBG"/>
    <property type="match status" value="1"/>
</dbReference>
<proteinExistence type="inferred from homology"/>
<feature type="chain" id="PRO_0000385791" description="GTPase Obg">
    <location>
        <begin position="1"/>
        <end position="372"/>
    </location>
</feature>
<feature type="domain" description="Obg" evidence="2">
    <location>
        <begin position="1"/>
        <end position="159"/>
    </location>
</feature>
<feature type="domain" description="OBG-type G" evidence="1">
    <location>
        <begin position="160"/>
        <end position="334"/>
    </location>
</feature>
<feature type="region of interest" description="Disordered" evidence="3">
    <location>
        <begin position="128"/>
        <end position="147"/>
    </location>
</feature>
<feature type="binding site" evidence="1">
    <location>
        <begin position="166"/>
        <end position="173"/>
    </location>
    <ligand>
        <name>GTP</name>
        <dbReference type="ChEBI" id="CHEBI:37565"/>
    </ligand>
</feature>
<feature type="binding site" evidence="1">
    <location>
        <position position="173"/>
    </location>
    <ligand>
        <name>Mg(2+)</name>
        <dbReference type="ChEBI" id="CHEBI:18420"/>
    </ligand>
</feature>
<feature type="binding site" evidence="1">
    <location>
        <begin position="191"/>
        <end position="195"/>
    </location>
    <ligand>
        <name>GTP</name>
        <dbReference type="ChEBI" id="CHEBI:37565"/>
    </ligand>
</feature>
<feature type="binding site" evidence="1">
    <location>
        <position position="193"/>
    </location>
    <ligand>
        <name>Mg(2+)</name>
        <dbReference type="ChEBI" id="CHEBI:18420"/>
    </ligand>
</feature>
<feature type="binding site" evidence="1">
    <location>
        <begin position="213"/>
        <end position="216"/>
    </location>
    <ligand>
        <name>GTP</name>
        <dbReference type="ChEBI" id="CHEBI:37565"/>
    </ligand>
</feature>
<feature type="binding site" evidence="1">
    <location>
        <begin position="284"/>
        <end position="287"/>
    </location>
    <ligand>
        <name>GTP</name>
        <dbReference type="ChEBI" id="CHEBI:37565"/>
    </ligand>
</feature>
<feature type="binding site" evidence="1">
    <location>
        <begin position="315"/>
        <end position="317"/>
    </location>
    <ligand>
        <name>GTP</name>
        <dbReference type="ChEBI" id="CHEBI:37565"/>
    </ligand>
</feature>
<protein>
    <recommendedName>
        <fullName evidence="1">GTPase Obg</fullName>
        <ecNumber evidence="1">3.6.5.-</ecNumber>
    </recommendedName>
    <alternativeName>
        <fullName evidence="1">GTP-binding protein Obg</fullName>
    </alternativeName>
</protein>
<sequence length="372" mass="40150">MKFIDEARIEVIAGDGGDGSASMRREKFVPFGGPDGGDGGRGGSVYVIADRNINTLIDYRYAKKHMARNGENGRGSDCYGKGGDDITLRMPVGTVINDMDTGELIADLTEHDQKVLVAKGGAGGLGNLHFKSSTNRAPRQKTDGKPGERRMLKLELKVLADVGLLGMPNAGKSTFISSVSNAKPKIADYPFTTLAPNLGVVRVGPGKSFVIADIPGLIEGAAEGAGLGHQFLRHLQRTGLLLHLVDLAPFDERVDPVAEARAIVGELRKYDESLYEKPRWLVLNKLDMVPEDERRARVADFIERFGWTGPVFEISALTGQGCEGLVYAIHDYLVEHSDAHRAELAEDLASDVRFRDAPGAGGEPHERDAGAH</sequence>